<accession>F4J7A7</accession>
<accession>Q9MA54</accession>
<dbReference type="EMBL" id="AC009606">
    <property type="protein sequence ID" value="AAF64541.1"/>
    <property type="molecule type" value="Genomic_DNA"/>
</dbReference>
<dbReference type="EMBL" id="CP002686">
    <property type="protein sequence ID" value="AEE74235.1"/>
    <property type="molecule type" value="Genomic_DNA"/>
</dbReference>
<dbReference type="EMBL" id="CP002686">
    <property type="protein sequence ID" value="AEE74236.1"/>
    <property type="molecule type" value="Genomic_DNA"/>
</dbReference>
<dbReference type="EMBL" id="BT015929">
    <property type="protein sequence ID" value="AAV31159.1"/>
    <property type="molecule type" value="mRNA"/>
</dbReference>
<dbReference type="EMBL" id="BT020565">
    <property type="protein sequence ID" value="AAW78584.1"/>
    <property type="molecule type" value="mRNA"/>
</dbReference>
<dbReference type="EMBL" id="BX825930">
    <property type="status" value="NOT_ANNOTATED_CDS"/>
    <property type="molecule type" value="mRNA"/>
</dbReference>
<dbReference type="RefSeq" id="NP_001154592.1">
    <molecule id="F4J7A7-1"/>
    <property type="nucleotide sequence ID" value="NM_001161120.2"/>
</dbReference>
<dbReference type="RefSeq" id="NP_187192.1">
    <molecule id="F4J7A7-2"/>
    <property type="nucleotide sequence ID" value="NM_111414.2"/>
</dbReference>
<dbReference type="SMR" id="F4J7A7"/>
<dbReference type="FunCoup" id="F4J7A7">
    <property type="interactions" value="1118"/>
</dbReference>
<dbReference type="STRING" id="3702.F4J7A7"/>
<dbReference type="iPTMnet" id="F4J7A7"/>
<dbReference type="PaxDb" id="3702-AT3G05410.2"/>
<dbReference type="ProteomicsDB" id="249041">
    <molecule id="F4J7A7-1"/>
</dbReference>
<dbReference type="EnsemblPlants" id="AT3G05410.1">
    <molecule id="F4J7A7-2"/>
    <property type="protein sequence ID" value="AT3G05410.1"/>
    <property type="gene ID" value="AT3G05410"/>
</dbReference>
<dbReference type="EnsemblPlants" id="AT3G05410.2">
    <molecule id="F4J7A7-1"/>
    <property type="protein sequence ID" value="AT3G05410.2"/>
    <property type="gene ID" value="AT3G05410"/>
</dbReference>
<dbReference type="GeneID" id="819705"/>
<dbReference type="Gramene" id="AT3G05410.1">
    <molecule id="F4J7A7-2"/>
    <property type="protein sequence ID" value="AT3G05410.1"/>
    <property type="gene ID" value="AT3G05410"/>
</dbReference>
<dbReference type="Gramene" id="AT3G05410.2">
    <molecule id="F4J7A7-1"/>
    <property type="protein sequence ID" value="AT3G05410.2"/>
    <property type="gene ID" value="AT3G05410"/>
</dbReference>
<dbReference type="KEGG" id="ath:AT3G05410"/>
<dbReference type="Araport" id="AT3G05410"/>
<dbReference type="TAIR" id="AT3G05410"/>
<dbReference type="eggNOG" id="ENOG502QS0I">
    <property type="taxonomic scope" value="Eukaryota"/>
</dbReference>
<dbReference type="HOGENOM" id="CLU_075416_0_0_1"/>
<dbReference type="InParanoid" id="F4J7A7"/>
<dbReference type="OMA" id="VLYPIQG"/>
<dbReference type="PRO" id="PR:F4J7A7"/>
<dbReference type="Proteomes" id="UP000006548">
    <property type="component" value="Chromosome 3"/>
</dbReference>
<dbReference type="ExpressionAtlas" id="F4J7A7">
    <property type="expression patterns" value="baseline and differential"/>
</dbReference>
<dbReference type="GO" id="GO:0009543">
    <property type="term" value="C:chloroplast thylakoid lumen"/>
    <property type="evidence" value="ECO:0000314"/>
    <property type="project" value="TAIR"/>
</dbReference>
<dbReference type="GO" id="GO:0019898">
    <property type="term" value="C:extrinsic component of membrane"/>
    <property type="evidence" value="ECO:0007669"/>
    <property type="project" value="InterPro"/>
</dbReference>
<dbReference type="GO" id="GO:0009654">
    <property type="term" value="C:photosystem II oxygen evolving complex"/>
    <property type="evidence" value="ECO:0007669"/>
    <property type="project" value="InterPro"/>
</dbReference>
<dbReference type="GO" id="GO:0005509">
    <property type="term" value="F:calcium ion binding"/>
    <property type="evidence" value="ECO:0007669"/>
    <property type="project" value="InterPro"/>
</dbReference>
<dbReference type="GO" id="GO:0015979">
    <property type="term" value="P:photosynthesis"/>
    <property type="evidence" value="ECO:0007669"/>
    <property type="project" value="InterPro"/>
</dbReference>
<dbReference type="Gene3D" id="3.40.1000.10">
    <property type="entry name" value="Mog1/PsbP, alpha/beta/alpha sandwich"/>
    <property type="match status" value="1"/>
</dbReference>
<dbReference type="InterPro" id="IPR016123">
    <property type="entry name" value="Mog1/PsbP_a/b/a-sand"/>
</dbReference>
<dbReference type="InterPro" id="IPR002683">
    <property type="entry name" value="PsbP_C"/>
</dbReference>
<dbReference type="NCBIfam" id="NF040946">
    <property type="entry name" value="PSII_PsbP"/>
    <property type="match status" value="1"/>
</dbReference>
<dbReference type="PANTHER" id="PTHR31407">
    <property type="match status" value="1"/>
</dbReference>
<dbReference type="PANTHER" id="PTHR31407:SF16">
    <property type="entry name" value="PSBP DOMAIN-CONTAINING PROTEIN 7, CHLOROPLASTIC"/>
    <property type="match status" value="1"/>
</dbReference>
<dbReference type="Pfam" id="PF01789">
    <property type="entry name" value="PsbP"/>
    <property type="match status" value="1"/>
</dbReference>
<dbReference type="SUPFAM" id="SSF55724">
    <property type="entry name" value="Mog1p/PsbP-like"/>
    <property type="match status" value="1"/>
</dbReference>
<keyword id="KW-0025">Alternative splicing</keyword>
<keyword id="KW-0150">Chloroplast</keyword>
<keyword id="KW-0934">Plastid</keyword>
<keyword id="KW-1185">Reference proteome</keyword>
<keyword id="KW-0809">Transit peptide</keyword>
<evidence type="ECO:0000255" key="1"/>
<evidence type="ECO:0000303" key="2">
    <source ref="3"/>
</evidence>
<evidence type="ECO:0000305" key="3"/>
<gene>
    <name type="primary">PPD7</name>
    <name type="ordered locus">At3g05410</name>
    <name type="ORF">F22F7.15</name>
</gene>
<name>PPD7_ARATH</name>
<comment type="subcellular location">
    <subcellularLocation>
        <location evidence="3">Plastid</location>
        <location evidence="3">Chloroplast</location>
    </subcellularLocation>
</comment>
<comment type="alternative products">
    <event type="alternative splicing"/>
    <isoform>
        <id>F4J7A7-1</id>
        <name>1</name>
        <sequence type="displayed"/>
    </isoform>
    <isoform>
        <id>F4J7A7-2</id>
        <name>2</name>
        <sequence type="described" ref="VSP_053424"/>
    </isoform>
</comment>
<comment type="similarity">
    <text evidence="3">Belongs to the PsbP family.</text>
</comment>
<proteinExistence type="evidence at transcript level"/>
<sequence length="280" mass="30524">MSLKPYFSLLYSSPTNVKLSNFLIAQQPSGDLKTTPAEEFSPLVEKFNRRLLLGVGSSSVLAIGANFGGTTSFILGLSPGIGRNLKLDVIYPIGGYSRCIDTVEGFEFIYPATWVGDQTLLYRAAEKSERENSLDLPPARNSRRKNVNEPVVAFGPPGSTGELNVSVIVSPVSPSFSIEAFGGPKEVGEAIVRTVTGSGQRADLKGTLLESSIRQDSERNLKYYELEFKVESPLFRRHNVAVCCAHSGRLYTLNAQAPESAWSEVKSEIYTTAKSFNIIS</sequence>
<reference key="1">
    <citation type="journal article" date="2000" name="Nature">
        <title>Sequence and analysis of chromosome 3 of the plant Arabidopsis thaliana.</title>
        <authorList>
            <person name="Salanoubat M."/>
            <person name="Lemcke K."/>
            <person name="Rieger M."/>
            <person name="Ansorge W."/>
            <person name="Unseld M."/>
            <person name="Fartmann B."/>
            <person name="Valle G."/>
            <person name="Bloecker H."/>
            <person name="Perez-Alonso M."/>
            <person name="Obermaier B."/>
            <person name="Delseny M."/>
            <person name="Boutry M."/>
            <person name="Grivell L.A."/>
            <person name="Mache R."/>
            <person name="Puigdomenech P."/>
            <person name="De Simone V."/>
            <person name="Choisne N."/>
            <person name="Artiguenave F."/>
            <person name="Robert C."/>
            <person name="Brottier P."/>
            <person name="Wincker P."/>
            <person name="Cattolico L."/>
            <person name="Weissenbach J."/>
            <person name="Saurin W."/>
            <person name="Quetier F."/>
            <person name="Schaefer M."/>
            <person name="Mueller-Auer S."/>
            <person name="Gabel C."/>
            <person name="Fuchs M."/>
            <person name="Benes V."/>
            <person name="Wurmbach E."/>
            <person name="Drzonek H."/>
            <person name="Erfle H."/>
            <person name="Jordan N."/>
            <person name="Bangert S."/>
            <person name="Wiedelmann R."/>
            <person name="Kranz H."/>
            <person name="Voss H."/>
            <person name="Holland R."/>
            <person name="Brandt P."/>
            <person name="Nyakatura G."/>
            <person name="Vezzi A."/>
            <person name="D'Angelo M."/>
            <person name="Pallavicini A."/>
            <person name="Toppo S."/>
            <person name="Simionati B."/>
            <person name="Conrad A."/>
            <person name="Hornischer K."/>
            <person name="Kauer G."/>
            <person name="Loehnert T.-H."/>
            <person name="Nordsiek G."/>
            <person name="Reichelt J."/>
            <person name="Scharfe M."/>
            <person name="Schoen O."/>
            <person name="Bargues M."/>
            <person name="Terol J."/>
            <person name="Climent J."/>
            <person name="Navarro P."/>
            <person name="Collado C."/>
            <person name="Perez-Perez A."/>
            <person name="Ottenwaelder B."/>
            <person name="Duchemin D."/>
            <person name="Cooke R."/>
            <person name="Laudie M."/>
            <person name="Berger-Llauro C."/>
            <person name="Purnelle B."/>
            <person name="Masuy D."/>
            <person name="de Haan M."/>
            <person name="Maarse A.C."/>
            <person name="Alcaraz J.-P."/>
            <person name="Cottet A."/>
            <person name="Casacuberta E."/>
            <person name="Monfort A."/>
            <person name="Argiriou A."/>
            <person name="Flores M."/>
            <person name="Liguori R."/>
            <person name="Vitale D."/>
            <person name="Mannhaupt G."/>
            <person name="Haase D."/>
            <person name="Schoof H."/>
            <person name="Rudd S."/>
            <person name="Zaccaria P."/>
            <person name="Mewes H.-W."/>
            <person name="Mayer K.F.X."/>
            <person name="Kaul S."/>
            <person name="Town C.D."/>
            <person name="Koo H.L."/>
            <person name="Tallon L.J."/>
            <person name="Jenkins J."/>
            <person name="Rooney T."/>
            <person name="Rizzo M."/>
            <person name="Walts A."/>
            <person name="Utterback T."/>
            <person name="Fujii C.Y."/>
            <person name="Shea T.P."/>
            <person name="Creasy T.H."/>
            <person name="Haas B."/>
            <person name="Maiti R."/>
            <person name="Wu D."/>
            <person name="Peterson J."/>
            <person name="Van Aken S."/>
            <person name="Pai G."/>
            <person name="Militscher J."/>
            <person name="Sellers P."/>
            <person name="Gill J.E."/>
            <person name="Feldblyum T.V."/>
            <person name="Preuss D."/>
            <person name="Lin X."/>
            <person name="Nierman W.C."/>
            <person name="Salzberg S.L."/>
            <person name="White O."/>
            <person name="Venter J.C."/>
            <person name="Fraser C.M."/>
            <person name="Kaneko T."/>
            <person name="Nakamura Y."/>
            <person name="Sato S."/>
            <person name="Kato T."/>
            <person name="Asamizu E."/>
            <person name="Sasamoto S."/>
            <person name="Kimura T."/>
            <person name="Idesawa K."/>
            <person name="Kawashima K."/>
            <person name="Kishida Y."/>
            <person name="Kiyokawa C."/>
            <person name="Kohara M."/>
            <person name="Matsumoto M."/>
            <person name="Matsuno A."/>
            <person name="Muraki A."/>
            <person name="Nakayama S."/>
            <person name="Nakazaki N."/>
            <person name="Shinpo S."/>
            <person name="Takeuchi C."/>
            <person name="Wada T."/>
            <person name="Watanabe A."/>
            <person name="Yamada M."/>
            <person name="Yasuda M."/>
            <person name="Tabata S."/>
        </authorList>
    </citation>
    <scope>NUCLEOTIDE SEQUENCE [LARGE SCALE GENOMIC DNA]</scope>
    <source>
        <strain>cv. Columbia</strain>
    </source>
</reference>
<reference key="2">
    <citation type="journal article" date="2017" name="Plant J.">
        <title>Araport11: a complete reannotation of the Arabidopsis thaliana reference genome.</title>
        <authorList>
            <person name="Cheng C.Y."/>
            <person name="Krishnakumar V."/>
            <person name="Chan A.P."/>
            <person name="Thibaud-Nissen F."/>
            <person name="Schobel S."/>
            <person name="Town C.D."/>
        </authorList>
    </citation>
    <scope>GENOME REANNOTATION</scope>
    <source>
        <strain>cv. Columbia</strain>
    </source>
</reference>
<reference key="3">
    <citation type="submission" date="2005-02" db="EMBL/GenBank/DDBJ databases">
        <title>Arabidopsis ORF clones.</title>
        <authorList>
            <person name="Kim C.J."/>
            <person name="Chen H."/>
            <person name="Cheuk R."/>
            <person name="Shinn P."/>
            <person name="Ecker J.R."/>
        </authorList>
    </citation>
    <scope>NUCLEOTIDE SEQUENCE [LARGE SCALE MRNA] (ISOFORM 2)</scope>
</reference>
<reference key="4">
    <citation type="journal article" date="2004" name="Genome Res.">
        <title>Whole genome sequence comparisons and 'full-length' cDNA sequences: a combined approach to evaluate and improve Arabidopsis genome annotation.</title>
        <authorList>
            <person name="Castelli V."/>
            <person name="Aury J.-M."/>
            <person name="Jaillon O."/>
            <person name="Wincker P."/>
            <person name="Clepet C."/>
            <person name="Menard M."/>
            <person name="Cruaud C."/>
            <person name="Quetier F."/>
            <person name="Scarpelli C."/>
            <person name="Schaechter V."/>
            <person name="Temple G."/>
            <person name="Caboche M."/>
            <person name="Weissenbach J."/>
            <person name="Salanoubat M."/>
        </authorList>
    </citation>
    <scope>NUCLEOTIDE SEQUENCE [LARGE SCALE MRNA] OF 2-280 (ISOFORM 1)</scope>
    <source>
        <strain>cv. Columbia</strain>
    </source>
</reference>
<reference key="5">
    <citation type="journal article" date="2010" name="Mol. Phylogenet. Evol.">
        <title>Phylogenomic and structural modeling analyses of the PsbP superfamily reveal multiple small segment additions in the evolution of photosystem II-associated PsbP protein in green plants.</title>
        <authorList>
            <person name="Sato N."/>
        </authorList>
    </citation>
    <scope>IDENTIFICATION</scope>
</reference>
<organism>
    <name type="scientific">Arabidopsis thaliana</name>
    <name type="common">Mouse-ear cress</name>
    <dbReference type="NCBI Taxonomy" id="3702"/>
    <lineage>
        <taxon>Eukaryota</taxon>
        <taxon>Viridiplantae</taxon>
        <taxon>Streptophyta</taxon>
        <taxon>Embryophyta</taxon>
        <taxon>Tracheophyta</taxon>
        <taxon>Spermatophyta</taxon>
        <taxon>Magnoliopsida</taxon>
        <taxon>eudicotyledons</taxon>
        <taxon>Gunneridae</taxon>
        <taxon>Pentapetalae</taxon>
        <taxon>rosids</taxon>
        <taxon>malvids</taxon>
        <taxon>Brassicales</taxon>
        <taxon>Brassicaceae</taxon>
        <taxon>Camelineae</taxon>
        <taxon>Arabidopsis</taxon>
    </lineage>
</organism>
<feature type="transit peptide" description="Chloroplast" evidence="1">
    <location>
        <begin position="1"/>
        <end position="36"/>
    </location>
</feature>
<feature type="chain" id="PRO_0000424373" description="PsbP domain-containing protein 7, chloroplastic">
    <location>
        <begin position="37"/>
        <end position="280"/>
    </location>
</feature>
<feature type="splice variant" id="VSP_053424" description="In isoform 2." evidence="2">
    <location>
        <begin position="178"/>
        <end position="280"/>
    </location>
</feature>
<protein>
    <recommendedName>
        <fullName>PsbP domain-containing protein 7, chloroplastic</fullName>
    </recommendedName>
    <alternativeName>
        <fullName>Photosystem II reaction center PsbP family protein</fullName>
    </alternativeName>
</protein>